<dbReference type="EMBL" id="Y13183">
    <property type="protein sequence ID" value="CAA73627.1"/>
    <property type="molecule type" value="Genomic_DNA"/>
</dbReference>
<dbReference type="SMR" id="O40633"/>
<dbReference type="GlyCosmos" id="O40633">
    <property type="glycosylation" value="3 sites, No reported glycans"/>
</dbReference>
<dbReference type="GO" id="GO:0005615">
    <property type="term" value="C:extracellular space"/>
    <property type="evidence" value="ECO:0007669"/>
    <property type="project" value="UniProtKB-KW"/>
</dbReference>
<dbReference type="GO" id="GO:0005125">
    <property type="term" value="F:cytokine activity"/>
    <property type="evidence" value="ECO:0007669"/>
    <property type="project" value="UniProtKB-KW"/>
</dbReference>
<dbReference type="FunFam" id="2.10.90.10:FF:000038">
    <property type="entry name" value="Interleukin-17A"/>
    <property type="match status" value="1"/>
</dbReference>
<dbReference type="Gene3D" id="2.10.90.10">
    <property type="entry name" value="Cystine-knot cytokines"/>
    <property type="match status" value="1"/>
</dbReference>
<dbReference type="InterPro" id="IPR029034">
    <property type="entry name" value="Cystine-knot_cytokine"/>
</dbReference>
<dbReference type="InterPro" id="IPR020440">
    <property type="entry name" value="IL-17_chr"/>
</dbReference>
<dbReference type="InterPro" id="IPR010345">
    <property type="entry name" value="IL-17_fam"/>
</dbReference>
<dbReference type="Pfam" id="PF06083">
    <property type="entry name" value="IL17"/>
    <property type="match status" value="1"/>
</dbReference>
<dbReference type="PRINTS" id="PR01932">
    <property type="entry name" value="INTRLEUKIN17"/>
</dbReference>
<dbReference type="SUPFAM" id="SSF57501">
    <property type="entry name" value="Cystine-knot cytokines"/>
    <property type="match status" value="1"/>
</dbReference>
<proteinExistence type="inferred from homology"/>
<feature type="signal peptide" evidence="2">
    <location>
        <begin position="1"/>
        <end position="22"/>
    </location>
</feature>
<feature type="chain" id="PRO_0000015434" description="Viral interleukin-17">
    <location>
        <begin position="23"/>
        <end position="151"/>
    </location>
</feature>
<feature type="glycosylation site" description="N-linked (GlcNAc...) asparagine; by host" evidence="2">
    <location>
        <position position="36"/>
    </location>
</feature>
<feature type="glycosylation site" description="N-linked (GlcNAc...) asparagine; by host" evidence="2">
    <location>
        <position position="53"/>
    </location>
</feature>
<feature type="glycosylation site" description="N-linked (GlcNAc...) asparagine; by host" evidence="2">
    <location>
        <position position="64"/>
    </location>
</feature>
<feature type="disulfide bond" evidence="1">
    <location>
        <begin position="90"/>
        <end position="140"/>
    </location>
</feature>
<feature type="disulfide bond" evidence="1">
    <location>
        <begin position="95"/>
        <end position="142"/>
    </location>
</feature>
<evidence type="ECO:0000250" key="1"/>
<evidence type="ECO:0000255" key="2"/>
<evidence type="ECO:0000305" key="3"/>
<comment type="subcellular location">
    <subcellularLocation>
        <location>Secreted</location>
    </subcellularLocation>
</comment>
<comment type="similarity">
    <text evidence="3">Belongs to the IL-17 family.</text>
</comment>
<protein>
    <recommendedName>
        <fullName>Viral interleukin-17</fullName>
        <shortName>vIL-17</shortName>
    </recommendedName>
    <alternativeName>
        <fullName>Immediate early gene 13 protein</fullName>
    </alternativeName>
</protein>
<sequence>MTFRKTSLVLLLLLSIDCIVKSEITSAQTPRCLAANNSFPRSVMVTLSIRNWNTSSKRASDYYNRSTSPWTLYRNEDQDRYPSVIWEAKCRYLGCVNADGNVDYHMNSVPIQQEILVVRKGHNPCPNSFRLEKMLVTVGCTCVTPIVHNVD</sequence>
<name>IL17_SHV2C</name>
<keyword id="KW-0202">Cytokine</keyword>
<keyword id="KW-1015">Disulfide bond</keyword>
<keyword id="KW-0244">Early protein</keyword>
<keyword id="KW-0325">Glycoprotein</keyword>
<keyword id="KW-0964">Secreted</keyword>
<keyword id="KW-0732">Signal</keyword>
<accession>O40633</accession>
<organismHost>
    <name type="scientific">Saimiri sciureus</name>
    <name type="common">Common squirrel monkey</name>
    <dbReference type="NCBI Taxonomy" id="9521"/>
</organismHost>
<gene>
    <name type="primary">13</name>
</gene>
<organism>
    <name type="scientific">Saimiriine herpesvirus 2 (strain 488)</name>
    <name type="common">SaHV-2</name>
    <name type="synonym">Herpesvirus saimiri</name>
    <dbReference type="NCBI Taxonomy" id="10384"/>
    <lineage>
        <taxon>Viruses</taxon>
        <taxon>Duplodnaviria</taxon>
        <taxon>Heunggongvirae</taxon>
        <taxon>Peploviricota</taxon>
        <taxon>Herviviricetes</taxon>
        <taxon>Herpesvirales</taxon>
        <taxon>Orthoherpesviridae</taxon>
        <taxon>Gammaherpesvirinae</taxon>
        <taxon>Rhadinovirus</taxon>
        <taxon>Rhadinovirus saimiriinegamma2</taxon>
        <taxon>Saimiriine herpesvirus 2</taxon>
    </lineage>
</organism>
<reference key="1">
    <citation type="journal article" date="1997" name="J. Virol.">
        <title>The superantigen-homologous viral immediate-early gene ie14/vsag in herpesvirus saimiri-transformed human T cells.</title>
        <authorList>
            <person name="Knappe A."/>
            <person name="Hiller C."/>
            <person name="Thurau M."/>
            <person name="Wittmann S."/>
            <person name="Hofmann H."/>
            <person name="Fleckenstein B."/>
            <person name="Fickenscher H."/>
        </authorList>
    </citation>
    <scope>NUCLEOTIDE SEQUENCE [GENOMIC DNA]</scope>
</reference>